<accession>A8FHG7</accession>
<keyword id="KW-0963">Cytoplasm</keyword>
<keyword id="KW-0694">RNA-binding</keyword>
<protein>
    <recommendedName>
        <fullName evidence="1">SsrA-binding protein</fullName>
    </recommendedName>
    <alternativeName>
        <fullName evidence="1">Small protein B</fullName>
    </alternativeName>
</protein>
<sequence length="156" mass="18100">MPKGEGKVVSQNKKANHDYFIEETYEAGLVLQGTEIKSIRAGKVNLKDSFAKIERGEVFLHNMHVSPYEQGNRYNHDPLRTRKLLLHRKQISKLIGATKEEGYSLVPLKLYLKNGFAKVLIGIGKGKKKYDKREDLKKKDAKREIERAFRDRQKQF</sequence>
<feature type="chain" id="PRO_1000057204" description="SsrA-binding protein">
    <location>
        <begin position="1"/>
        <end position="156"/>
    </location>
</feature>
<gene>
    <name evidence="1" type="primary">smpB</name>
    <name type="ordered locus">BPUM_3030</name>
</gene>
<name>SSRP_BACP2</name>
<organism>
    <name type="scientific">Bacillus pumilus (strain SAFR-032)</name>
    <dbReference type="NCBI Taxonomy" id="315750"/>
    <lineage>
        <taxon>Bacteria</taxon>
        <taxon>Bacillati</taxon>
        <taxon>Bacillota</taxon>
        <taxon>Bacilli</taxon>
        <taxon>Bacillales</taxon>
        <taxon>Bacillaceae</taxon>
        <taxon>Bacillus</taxon>
    </lineage>
</organism>
<comment type="function">
    <text evidence="1">Required for rescue of stalled ribosomes mediated by trans-translation. Binds to transfer-messenger RNA (tmRNA), required for stable association of tmRNA with ribosomes. tmRNA and SmpB together mimic tRNA shape, replacing the anticodon stem-loop with SmpB. tmRNA is encoded by the ssrA gene; the 2 termini fold to resemble tRNA(Ala) and it encodes a 'tag peptide', a short internal open reading frame. During trans-translation Ala-aminoacylated tmRNA acts like a tRNA, entering the A-site of stalled ribosomes, displacing the stalled mRNA. The ribosome then switches to translate the ORF on the tmRNA; the nascent peptide is terminated with the 'tag peptide' encoded by the tmRNA and targeted for degradation. The ribosome is freed to recommence translation, which seems to be the essential function of trans-translation.</text>
</comment>
<comment type="subcellular location">
    <subcellularLocation>
        <location evidence="1">Cytoplasm</location>
    </subcellularLocation>
    <text evidence="1">The tmRNA-SmpB complex associates with stalled 70S ribosomes.</text>
</comment>
<comment type="similarity">
    <text evidence="1">Belongs to the SmpB family.</text>
</comment>
<proteinExistence type="inferred from homology"/>
<dbReference type="EMBL" id="CP000813">
    <property type="protein sequence ID" value="ABV63684.1"/>
    <property type="molecule type" value="Genomic_DNA"/>
</dbReference>
<dbReference type="RefSeq" id="WP_012011279.1">
    <property type="nucleotide sequence ID" value="NZ_VEIS01000009.1"/>
</dbReference>
<dbReference type="SMR" id="A8FHG7"/>
<dbReference type="STRING" id="315750.BPUM_3030"/>
<dbReference type="GeneID" id="61769013"/>
<dbReference type="KEGG" id="bpu:BPUM_3030"/>
<dbReference type="eggNOG" id="COG0691">
    <property type="taxonomic scope" value="Bacteria"/>
</dbReference>
<dbReference type="HOGENOM" id="CLU_108953_0_0_9"/>
<dbReference type="OrthoDB" id="9805462at2"/>
<dbReference type="Proteomes" id="UP000001355">
    <property type="component" value="Chromosome"/>
</dbReference>
<dbReference type="GO" id="GO:0005829">
    <property type="term" value="C:cytosol"/>
    <property type="evidence" value="ECO:0007669"/>
    <property type="project" value="TreeGrafter"/>
</dbReference>
<dbReference type="GO" id="GO:0003723">
    <property type="term" value="F:RNA binding"/>
    <property type="evidence" value="ECO:0007669"/>
    <property type="project" value="UniProtKB-UniRule"/>
</dbReference>
<dbReference type="GO" id="GO:0070929">
    <property type="term" value="P:trans-translation"/>
    <property type="evidence" value="ECO:0007669"/>
    <property type="project" value="UniProtKB-UniRule"/>
</dbReference>
<dbReference type="CDD" id="cd09294">
    <property type="entry name" value="SmpB"/>
    <property type="match status" value="1"/>
</dbReference>
<dbReference type="Gene3D" id="2.40.280.10">
    <property type="match status" value="1"/>
</dbReference>
<dbReference type="HAMAP" id="MF_00023">
    <property type="entry name" value="SmpB"/>
    <property type="match status" value="1"/>
</dbReference>
<dbReference type="InterPro" id="IPR023620">
    <property type="entry name" value="SmpB"/>
</dbReference>
<dbReference type="InterPro" id="IPR000037">
    <property type="entry name" value="SsrA-bd_prot"/>
</dbReference>
<dbReference type="InterPro" id="IPR020081">
    <property type="entry name" value="SsrA-bd_prot_CS"/>
</dbReference>
<dbReference type="NCBIfam" id="NF003843">
    <property type="entry name" value="PRK05422.1"/>
    <property type="match status" value="1"/>
</dbReference>
<dbReference type="NCBIfam" id="TIGR00086">
    <property type="entry name" value="smpB"/>
    <property type="match status" value="1"/>
</dbReference>
<dbReference type="PANTHER" id="PTHR30308:SF2">
    <property type="entry name" value="SSRA-BINDING PROTEIN"/>
    <property type="match status" value="1"/>
</dbReference>
<dbReference type="PANTHER" id="PTHR30308">
    <property type="entry name" value="TMRNA-BINDING COMPONENT OF TRANS-TRANSLATION TAGGING COMPLEX"/>
    <property type="match status" value="1"/>
</dbReference>
<dbReference type="Pfam" id="PF01668">
    <property type="entry name" value="SmpB"/>
    <property type="match status" value="1"/>
</dbReference>
<dbReference type="SUPFAM" id="SSF74982">
    <property type="entry name" value="Small protein B (SmpB)"/>
    <property type="match status" value="1"/>
</dbReference>
<dbReference type="PROSITE" id="PS01317">
    <property type="entry name" value="SSRP"/>
    <property type="match status" value="1"/>
</dbReference>
<evidence type="ECO:0000255" key="1">
    <source>
        <dbReference type="HAMAP-Rule" id="MF_00023"/>
    </source>
</evidence>
<reference key="1">
    <citation type="journal article" date="2007" name="PLoS ONE">
        <title>Paradoxical DNA repair and peroxide resistance gene conservation in Bacillus pumilus SAFR-032.</title>
        <authorList>
            <person name="Gioia J."/>
            <person name="Yerrapragada S."/>
            <person name="Qin X."/>
            <person name="Jiang H."/>
            <person name="Igboeli O.C."/>
            <person name="Muzny D."/>
            <person name="Dugan-Rocha S."/>
            <person name="Ding Y."/>
            <person name="Hawes A."/>
            <person name="Liu W."/>
            <person name="Perez L."/>
            <person name="Kovar C."/>
            <person name="Dinh H."/>
            <person name="Lee S."/>
            <person name="Nazareth L."/>
            <person name="Blyth P."/>
            <person name="Holder M."/>
            <person name="Buhay C."/>
            <person name="Tirumalai M.R."/>
            <person name="Liu Y."/>
            <person name="Dasgupta I."/>
            <person name="Bokhetache L."/>
            <person name="Fujita M."/>
            <person name="Karouia F."/>
            <person name="Eswara Moorthy P."/>
            <person name="Siefert J."/>
            <person name="Uzman A."/>
            <person name="Buzumbo P."/>
            <person name="Verma A."/>
            <person name="Zwiya H."/>
            <person name="McWilliams B.D."/>
            <person name="Olowu A."/>
            <person name="Clinkenbeard K.D."/>
            <person name="Newcombe D."/>
            <person name="Golebiewski L."/>
            <person name="Petrosino J.F."/>
            <person name="Nicholson W.L."/>
            <person name="Fox G.E."/>
            <person name="Venkateswaran K."/>
            <person name="Highlander S.K."/>
            <person name="Weinstock G.M."/>
        </authorList>
    </citation>
    <scope>NUCLEOTIDE SEQUENCE [LARGE SCALE GENOMIC DNA]</scope>
    <source>
        <strain>SAFR-032</strain>
    </source>
</reference>